<feature type="chain" id="PRO_0000387896" description="4-hydroxy-2-oxovalerate aldolase 5">
    <location>
        <begin position="1"/>
        <end position="352"/>
    </location>
</feature>
<feature type="domain" description="Pyruvate carboxyltransferase" evidence="1">
    <location>
        <begin position="9"/>
        <end position="261"/>
    </location>
</feature>
<feature type="active site" description="Proton acceptor" evidence="1">
    <location>
        <position position="21"/>
    </location>
</feature>
<feature type="binding site" evidence="1">
    <location>
        <begin position="17"/>
        <end position="18"/>
    </location>
    <ligand>
        <name>substrate</name>
    </ligand>
</feature>
<feature type="binding site" evidence="1">
    <location>
        <position position="18"/>
    </location>
    <ligand>
        <name>Mn(2+)</name>
        <dbReference type="ChEBI" id="CHEBI:29035"/>
    </ligand>
</feature>
<feature type="binding site" evidence="1">
    <location>
        <position position="171"/>
    </location>
    <ligand>
        <name>substrate</name>
    </ligand>
</feature>
<feature type="binding site" evidence="1">
    <location>
        <position position="200"/>
    </location>
    <ligand>
        <name>Mn(2+)</name>
        <dbReference type="ChEBI" id="CHEBI:29035"/>
    </ligand>
</feature>
<feature type="binding site" evidence="1">
    <location>
        <position position="200"/>
    </location>
    <ligand>
        <name>substrate</name>
    </ligand>
</feature>
<feature type="binding site" evidence="1">
    <location>
        <position position="202"/>
    </location>
    <ligand>
        <name>Mn(2+)</name>
        <dbReference type="ChEBI" id="CHEBI:29035"/>
    </ligand>
</feature>
<feature type="binding site" evidence="1">
    <location>
        <position position="291"/>
    </location>
    <ligand>
        <name>substrate</name>
    </ligand>
</feature>
<feature type="site" description="Transition state stabilizer" evidence="1">
    <location>
        <position position="17"/>
    </location>
</feature>
<dbReference type="EC" id="4.1.3.39" evidence="1"/>
<dbReference type="EMBL" id="AP011115">
    <property type="protein sequence ID" value="BAH54109.1"/>
    <property type="molecule type" value="Genomic_DNA"/>
</dbReference>
<dbReference type="RefSeq" id="WP_015889603.1">
    <property type="nucleotide sequence ID" value="NC_012522.1"/>
</dbReference>
<dbReference type="SMR" id="C1AYB4"/>
<dbReference type="STRING" id="632772.ROP_58620"/>
<dbReference type="KEGG" id="rop:ROP_58620"/>
<dbReference type="PATRIC" id="fig|632772.20.peg.6125"/>
<dbReference type="HOGENOM" id="CLU_049173_0_0_11"/>
<dbReference type="OrthoDB" id="9803573at2"/>
<dbReference type="Proteomes" id="UP000002212">
    <property type="component" value="Chromosome"/>
</dbReference>
<dbReference type="GO" id="GO:0003852">
    <property type="term" value="F:2-isopropylmalate synthase activity"/>
    <property type="evidence" value="ECO:0007669"/>
    <property type="project" value="TreeGrafter"/>
</dbReference>
<dbReference type="GO" id="GO:0008701">
    <property type="term" value="F:4-hydroxy-2-oxovalerate aldolase activity"/>
    <property type="evidence" value="ECO:0007669"/>
    <property type="project" value="UniProtKB-UniRule"/>
</dbReference>
<dbReference type="GO" id="GO:0030145">
    <property type="term" value="F:manganese ion binding"/>
    <property type="evidence" value="ECO:0007669"/>
    <property type="project" value="UniProtKB-UniRule"/>
</dbReference>
<dbReference type="GO" id="GO:0009056">
    <property type="term" value="P:catabolic process"/>
    <property type="evidence" value="ECO:0007669"/>
    <property type="project" value="UniProtKB-KW"/>
</dbReference>
<dbReference type="GO" id="GO:0009098">
    <property type="term" value="P:L-leucine biosynthetic process"/>
    <property type="evidence" value="ECO:0007669"/>
    <property type="project" value="TreeGrafter"/>
</dbReference>
<dbReference type="CDD" id="cd07943">
    <property type="entry name" value="DRE_TIM_HOA"/>
    <property type="match status" value="1"/>
</dbReference>
<dbReference type="Gene3D" id="1.10.8.60">
    <property type="match status" value="1"/>
</dbReference>
<dbReference type="Gene3D" id="3.20.20.70">
    <property type="entry name" value="Aldolase class I"/>
    <property type="match status" value="1"/>
</dbReference>
<dbReference type="HAMAP" id="MF_01656">
    <property type="entry name" value="HOA"/>
    <property type="match status" value="1"/>
</dbReference>
<dbReference type="InterPro" id="IPR050073">
    <property type="entry name" value="2-IPM_HCS-like"/>
</dbReference>
<dbReference type="InterPro" id="IPR017629">
    <property type="entry name" value="4OH_2_O-val_aldolase"/>
</dbReference>
<dbReference type="InterPro" id="IPR013785">
    <property type="entry name" value="Aldolase_TIM"/>
</dbReference>
<dbReference type="InterPro" id="IPR012425">
    <property type="entry name" value="DmpG_comm"/>
</dbReference>
<dbReference type="InterPro" id="IPR035685">
    <property type="entry name" value="DRE_TIM_HOA"/>
</dbReference>
<dbReference type="InterPro" id="IPR000891">
    <property type="entry name" value="PYR_CT"/>
</dbReference>
<dbReference type="NCBIfam" id="TIGR03217">
    <property type="entry name" value="4OH_2_O_val_ald"/>
    <property type="match status" value="1"/>
</dbReference>
<dbReference type="NCBIfam" id="NF006049">
    <property type="entry name" value="PRK08195.1"/>
    <property type="match status" value="1"/>
</dbReference>
<dbReference type="PANTHER" id="PTHR10277:SF9">
    <property type="entry name" value="2-ISOPROPYLMALATE SYNTHASE 1, CHLOROPLASTIC-RELATED"/>
    <property type="match status" value="1"/>
</dbReference>
<dbReference type="PANTHER" id="PTHR10277">
    <property type="entry name" value="HOMOCITRATE SYNTHASE-RELATED"/>
    <property type="match status" value="1"/>
</dbReference>
<dbReference type="Pfam" id="PF07836">
    <property type="entry name" value="DmpG_comm"/>
    <property type="match status" value="1"/>
</dbReference>
<dbReference type="Pfam" id="PF00682">
    <property type="entry name" value="HMGL-like"/>
    <property type="match status" value="1"/>
</dbReference>
<dbReference type="SUPFAM" id="SSF51569">
    <property type="entry name" value="Aldolase"/>
    <property type="match status" value="1"/>
</dbReference>
<dbReference type="SUPFAM" id="SSF89000">
    <property type="entry name" value="post-HMGL domain-like"/>
    <property type="match status" value="1"/>
</dbReference>
<dbReference type="PROSITE" id="PS50991">
    <property type="entry name" value="PYR_CT"/>
    <property type="match status" value="1"/>
</dbReference>
<keyword id="KW-0058">Aromatic hydrocarbons catabolism</keyword>
<keyword id="KW-0456">Lyase</keyword>
<keyword id="KW-0464">Manganese</keyword>
<keyword id="KW-0479">Metal-binding</keyword>
<name>HOA5_RHOOB</name>
<organism>
    <name type="scientific">Rhodococcus opacus (strain B4)</name>
    <dbReference type="NCBI Taxonomy" id="632772"/>
    <lineage>
        <taxon>Bacteria</taxon>
        <taxon>Bacillati</taxon>
        <taxon>Actinomycetota</taxon>
        <taxon>Actinomycetes</taxon>
        <taxon>Mycobacteriales</taxon>
        <taxon>Nocardiaceae</taxon>
        <taxon>Rhodococcus</taxon>
    </lineage>
</organism>
<gene>
    <name type="ordered locus">ROP_58620</name>
</gene>
<sequence length="352" mass="36903">MPYSADLDIRVTDSSLRDGSHAKRHQFTVEHVRSIVGALDAAGVPVIEVTHGDGLGGSSFNYGFSHTPEQELIKAAVETAEQAKIAFLMLPGLGVRSDIREAADNGASICRIATHCTEADISVQHFGLARDLGLETVGFLMMSHSQPPEVLAKQARIMADAGCQCVYVVDSAGALILNAVSDRVSALVAELGDDAQVGFHGHENLGLGVANSVLAVEAGALQIDGSTRRFGAGAGNTPVEAFAAVTEKLGIRTGIDTLKIIDAAEDVVRPIMDGDCLLDRLSLTMGYAGVYSSFLKHADSHASRYGVSGAEILIEAGRRKLVGGQEDQLIEIALGLADRKSAETAVAEKKSA</sequence>
<reference key="1">
    <citation type="submission" date="2009-03" db="EMBL/GenBank/DDBJ databases">
        <title>Comparison of the complete genome sequences of Rhodococcus erythropolis PR4 and Rhodococcus opacus B4.</title>
        <authorList>
            <person name="Takarada H."/>
            <person name="Sekine M."/>
            <person name="Hosoyama A."/>
            <person name="Yamada R."/>
            <person name="Fujisawa T."/>
            <person name="Omata S."/>
            <person name="Shimizu A."/>
            <person name="Tsukatani N."/>
            <person name="Tanikawa S."/>
            <person name="Fujita N."/>
            <person name="Harayama S."/>
        </authorList>
    </citation>
    <scope>NUCLEOTIDE SEQUENCE [LARGE SCALE GENOMIC DNA]</scope>
    <source>
        <strain>B4</strain>
    </source>
</reference>
<accession>C1AYB4</accession>
<evidence type="ECO:0000255" key="1">
    <source>
        <dbReference type="HAMAP-Rule" id="MF_01656"/>
    </source>
</evidence>
<comment type="catalytic activity">
    <reaction evidence="1">
        <text>(S)-4-hydroxy-2-oxopentanoate = acetaldehyde + pyruvate</text>
        <dbReference type="Rhea" id="RHEA:22624"/>
        <dbReference type="ChEBI" id="CHEBI:15343"/>
        <dbReference type="ChEBI" id="CHEBI:15361"/>
        <dbReference type="ChEBI" id="CHEBI:73143"/>
        <dbReference type="EC" id="4.1.3.39"/>
    </reaction>
</comment>
<comment type="similarity">
    <text evidence="1">Belongs to the 4-hydroxy-2-oxovalerate aldolase family.</text>
</comment>
<proteinExistence type="inferred from homology"/>
<protein>
    <recommendedName>
        <fullName evidence="1">4-hydroxy-2-oxovalerate aldolase 5</fullName>
        <shortName evidence="1">HOA 5</shortName>
        <ecNumber evidence="1">4.1.3.39</ecNumber>
    </recommendedName>
    <alternativeName>
        <fullName evidence="1">4-hydroxy-2-keto-pentanoic acid aldolase 5</fullName>
    </alternativeName>
    <alternativeName>
        <fullName evidence="1">4-hydroxy-2-oxopentanoate aldolase 5</fullName>
    </alternativeName>
</protein>